<reference key="1">
    <citation type="submission" date="2002-12" db="EMBL/GenBank/DDBJ databases">
        <title>Complete genome sequence of Vibrio vulnificus CMCP6.</title>
        <authorList>
            <person name="Rhee J.H."/>
            <person name="Kim S.Y."/>
            <person name="Chung S.S."/>
            <person name="Kim J.J."/>
            <person name="Moon Y.H."/>
            <person name="Jeong H."/>
            <person name="Choy H.E."/>
        </authorList>
    </citation>
    <scope>NUCLEOTIDE SEQUENCE [LARGE SCALE GENOMIC DNA]</scope>
    <source>
        <strain>CMCP6</strain>
    </source>
</reference>
<gene>
    <name type="ordered locus">VV1_0535</name>
</gene>
<feature type="chain" id="PRO_0000204017" description="UPF0246 protein VV1_0535">
    <location>
        <begin position="1"/>
        <end position="258"/>
    </location>
</feature>
<proteinExistence type="inferred from homology"/>
<evidence type="ECO:0000255" key="1">
    <source>
        <dbReference type="HAMAP-Rule" id="MF_00652"/>
    </source>
</evidence>
<comment type="similarity">
    <text evidence="1">Belongs to the UPF0246 family.</text>
</comment>
<sequence length="258" mass="29269">MLIVVSPAKTLDYESPLVTHKFTQPELVDYSKQLIEVCRQLTPADVASLMKVSDKIADLNVGRFQEWSEEFTPDNARQAILAFKGDVYTGLEAETLNDDDFDYAQKHLRMLSGLYGLLKPLDLMQPYRLEMGTKLANPKGSNLYQFWGNVITEKLNEAIVAQGDNVLINLASNEYFKAVKPKALDAQVITPIFKDAKNGQYKVISFFAKKARGMMARYIIENRISSVADLTQFDSAGYYFVEEESTPTELVFKREEQH</sequence>
<name>Y535_VIBVU</name>
<organism>
    <name type="scientific">Vibrio vulnificus (strain CMCP6)</name>
    <dbReference type="NCBI Taxonomy" id="216895"/>
    <lineage>
        <taxon>Bacteria</taxon>
        <taxon>Pseudomonadati</taxon>
        <taxon>Pseudomonadota</taxon>
        <taxon>Gammaproteobacteria</taxon>
        <taxon>Vibrionales</taxon>
        <taxon>Vibrionaceae</taxon>
        <taxon>Vibrio</taxon>
    </lineage>
</organism>
<accession>Q8DEQ1</accession>
<protein>
    <recommendedName>
        <fullName evidence="1">UPF0246 protein VV1_0535</fullName>
    </recommendedName>
</protein>
<dbReference type="EMBL" id="AE016795">
    <property type="protein sequence ID" value="AAO09053.1"/>
    <property type="molecule type" value="Genomic_DNA"/>
</dbReference>
<dbReference type="SMR" id="Q8DEQ1"/>
<dbReference type="KEGG" id="vvu:VV1_0535"/>
<dbReference type="HOGENOM" id="CLU_061989_0_0_6"/>
<dbReference type="Proteomes" id="UP000002275">
    <property type="component" value="Chromosome 1"/>
</dbReference>
<dbReference type="GO" id="GO:0005829">
    <property type="term" value="C:cytosol"/>
    <property type="evidence" value="ECO:0007669"/>
    <property type="project" value="TreeGrafter"/>
</dbReference>
<dbReference type="GO" id="GO:0033194">
    <property type="term" value="P:response to hydroperoxide"/>
    <property type="evidence" value="ECO:0007669"/>
    <property type="project" value="TreeGrafter"/>
</dbReference>
<dbReference type="HAMAP" id="MF_00652">
    <property type="entry name" value="UPF0246"/>
    <property type="match status" value="1"/>
</dbReference>
<dbReference type="InterPro" id="IPR005583">
    <property type="entry name" value="YaaA"/>
</dbReference>
<dbReference type="NCBIfam" id="NF002541">
    <property type="entry name" value="PRK02101.1-1"/>
    <property type="match status" value="1"/>
</dbReference>
<dbReference type="NCBIfam" id="NF002542">
    <property type="entry name" value="PRK02101.1-3"/>
    <property type="match status" value="1"/>
</dbReference>
<dbReference type="PANTHER" id="PTHR30283:SF4">
    <property type="entry name" value="PEROXIDE STRESS RESISTANCE PROTEIN YAAA"/>
    <property type="match status" value="1"/>
</dbReference>
<dbReference type="PANTHER" id="PTHR30283">
    <property type="entry name" value="PEROXIDE STRESS RESPONSE PROTEIN YAAA"/>
    <property type="match status" value="1"/>
</dbReference>
<dbReference type="Pfam" id="PF03883">
    <property type="entry name" value="H2O2_YaaD"/>
    <property type="match status" value="1"/>
</dbReference>